<sequence length="148" mass="15256">MFDVTLLILLGLAALGFISHNTTVAVSILVLIIVRVTPLSTFFPWIEKQGLSIGIIILTIGVMAPIASGTLPPSTLIHSFLNWKSLVAIAVGVIVSWLGGRGVTLMGSQPQLVAGLLVGTVLGVALFRGVPVGPLIAAGLVSLIVGKQ</sequence>
<keyword id="KW-1003">Cell membrane</keyword>
<keyword id="KW-0472">Membrane</keyword>
<keyword id="KW-1185">Reference proteome</keyword>
<keyword id="KW-0812">Transmembrane</keyword>
<keyword id="KW-1133">Transmembrane helix</keyword>
<accession>A7ZMQ9</accession>
<feature type="chain" id="PRO_0000388863" description="UPF0756 membrane protein YeaL">
    <location>
        <begin position="1"/>
        <end position="148"/>
    </location>
</feature>
<feature type="transmembrane region" description="Helical" evidence="1">
    <location>
        <begin position="14"/>
        <end position="34"/>
    </location>
</feature>
<feature type="transmembrane region" description="Helical" evidence="1">
    <location>
        <begin position="51"/>
        <end position="71"/>
    </location>
</feature>
<feature type="transmembrane region" description="Helical" evidence="1">
    <location>
        <begin position="86"/>
        <end position="106"/>
    </location>
</feature>
<feature type="transmembrane region" description="Helical" evidence="1">
    <location>
        <begin position="121"/>
        <end position="141"/>
    </location>
</feature>
<comment type="subcellular location">
    <subcellularLocation>
        <location evidence="1">Cell membrane</location>
        <topology evidence="1">Multi-pass membrane protein</topology>
    </subcellularLocation>
</comment>
<comment type="similarity">
    <text evidence="1">Belongs to the UPF0756 family.</text>
</comment>
<dbReference type="EMBL" id="CP000800">
    <property type="protein sequence ID" value="ABV20679.1"/>
    <property type="molecule type" value="Genomic_DNA"/>
</dbReference>
<dbReference type="RefSeq" id="WP_000460707.1">
    <property type="nucleotide sequence ID" value="NC_009801.1"/>
</dbReference>
<dbReference type="KEGG" id="ecw:EcE24377A_2014"/>
<dbReference type="HOGENOM" id="CLU_125889_0_0_6"/>
<dbReference type="Proteomes" id="UP000001122">
    <property type="component" value="Chromosome"/>
</dbReference>
<dbReference type="GO" id="GO:0005886">
    <property type="term" value="C:plasma membrane"/>
    <property type="evidence" value="ECO:0007669"/>
    <property type="project" value="UniProtKB-SubCell"/>
</dbReference>
<dbReference type="HAMAP" id="MF_01874">
    <property type="entry name" value="UPF0756"/>
    <property type="match status" value="1"/>
</dbReference>
<dbReference type="InterPro" id="IPR007382">
    <property type="entry name" value="UPF0756_TM"/>
</dbReference>
<dbReference type="PANTHER" id="PTHR38452">
    <property type="entry name" value="UPF0756 MEMBRANE PROTEIN YEAL"/>
    <property type="match status" value="1"/>
</dbReference>
<dbReference type="PANTHER" id="PTHR38452:SF1">
    <property type="entry name" value="UPF0756 MEMBRANE PROTEIN YEAL"/>
    <property type="match status" value="1"/>
</dbReference>
<dbReference type="Pfam" id="PF04284">
    <property type="entry name" value="DUF441"/>
    <property type="match status" value="1"/>
</dbReference>
<reference key="1">
    <citation type="journal article" date="2008" name="J. Bacteriol.">
        <title>The pangenome structure of Escherichia coli: comparative genomic analysis of E. coli commensal and pathogenic isolates.</title>
        <authorList>
            <person name="Rasko D.A."/>
            <person name="Rosovitz M.J."/>
            <person name="Myers G.S.A."/>
            <person name="Mongodin E.F."/>
            <person name="Fricke W.F."/>
            <person name="Gajer P."/>
            <person name="Crabtree J."/>
            <person name="Sebaihia M."/>
            <person name="Thomson N.R."/>
            <person name="Chaudhuri R."/>
            <person name="Henderson I.R."/>
            <person name="Sperandio V."/>
            <person name="Ravel J."/>
        </authorList>
    </citation>
    <scope>NUCLEOTIDE SEQUENCE [LARGE SCALE GENOMIC DNA]</scope>
    <source>
        <strain>E24377A / ETEC</strain>
    </source>
</reference>
<proteinExistence type="inferred from homology"/>
<gene>
    <name evidence="1" type="primary">yeaL</name>
    <name type="ordered locus">EcE24377A_2014</name>
</gene>
<organism>
    <name type="scientific">Escherichia coli O139:H28 (strain E24377A / ETEC)</name>
    <dbReference type="NCBI Taxonomy" id="331111"/>
    <lineage>
        <taxon>Bacteria</taxon>
        <taxon>Pseudomonadati</taxon>
        <taxon>Pseudomonadota</taxon>
        <taxon>Gammaproteobacteria</taxon>
        <taxon>Enterobacterales</taxon>
        <taxon>Enterobacteriaceae</taxon>
        <taxon>Escherichia</taxon>
    </lineage>
</organism>
<evidence type="ECO:0000255" key="1">
    <source>
        <dbReference type="HAMAP-Rule" id="MF_01874"/>
    </source>
</evidence>
<protein>
    <recommendedName>
        <fullName evidence="1">UPF0756 membrane protein YeaL</fullName>
    </recommendedName>
</protein>
<name>YEAL_ECO24</name>